<proteinExistence type="inferred from homology"/>
<feature type="chain" id="PRO_1000148369" description="Ribonuclease P protein component 2">
    <location>
        <begin position="1"/>
        <end position="120"/>
    </location>
</feature>
<evidence type="ECO:0000255" key="1">
    <source>
        <dbReference type="HAMAP-Rule" id="MF_00755"/>
    </source>
</evidence>
<comment type="function">
    <text evidence="1">Part of ribonuclease P, a protein complex that generates mature tRNA molecules by cleaving their 5'-ends.</text>
</comment>
<comment type="catalytic activity">
    <reaction evidence="1">
        <text>Endonucleolytic cleavage of RNA, removing 5'-extranucleotides from tRNA precursor.</text>
        <dbReference type="EC" id="3.1.26.5"/>
    </reaction>
</comment>
<comment type="subunit">
    <text evidence="1">Consists of a catalytic RNA component and at least 4-5 protein subunits.</text>
</comment>
<comment type="subcellular location">
    <subcellularLocation>
        <location evidence="1">Cytoplasm</location>
    </subcellularLocation>
</comment>
<comment type="similarity">
    <text evidence="1">Belongs to the eukaryotic/archaeal RNase P protein component 2 family.</text>
</comment>
<dbReference type="EC" id="3.1.26.5" evidence="1"/>
<dbReference type="EMBL" id="CP000678">
    <property type="protein sequence ID" value="ABQ86451.1"/>
    <property type="molecule type" value="Genomic_DNA"/>
</dbReference>
<dbReference type="RefSeq" id="WP_011953780.1">
    <property type="nucleotide sequence ID" value="NZ_CP117965.1"/>
</dbReference>
<dbReference type="SMR" id="A5UJS3"/>
<dbReference type="STRING" id="420247.Msm_0246"/>
<dbReference type="EnsemblBacteria" id="ABQ86451">
    <property type="protein sequence ID" value="ABQ86451"/>
    <property type="gene ID" value="Msm_0246"/>
</dbReference>
<dbReference type="KEGG" id="msi:Msm_0246"/>
<dbReference type="PATRIC" id="fig|420247.28.peg.249"/>
<dbReference type="eggNOG" id="arCOG01365">
    <property type="taxonomic scope" value="Archaea"/>
</dbReference>
<dbReference type="HOGENOM" id="CLU_137733_1_0_2"/>
<dbReference type="Proteomes" id="UP000001992">
    <property type="component" value="Chromosome"/>
</dbReference>
<dbReference type="GO" id="GO:0005737">
    <property type="term" value="C:cytoplasm"/>
    <property type="evidence" value="ECO:0007669"/>
    <property type="project" value="UniProtKB-SubCell"/>
</dbReference>
<dbReference type="GO" id="GO:0030677">
    <property type="term" value="C:ribonuclease P complex"/>
    <property type="evidence" value="ECO:0007669"/>
    <property type="project" value="UniProtKB-UniRule"/>
</dbReference>
<dbReference type="GO" id="GO:0004526">
    <property type="term" value="F:ribonuclease P activity"/>
    <property type="evidence" value="ECO:0007669"/>
    <property type="project" value="UniProtKB-UniRule"/>
</dbReference>
<dbReference type="GO" id="GO:0001682">
    <property type="term" value="P:tRNA 5'-leader removal"/>
    <property type="evidence" value="ECO:0007669"/>
    <property type="project" value="UniProtKB-UniRule"/>
</dbReference>
<dbReference type="Gene3D" id="3.30.70.3250">
    <property type="entry name" value="Ribonuclease P, Pop5 subunit"/>
    <property type="match status" value="1"/>
</dbReference>
<dbReference type="HAMAP" id="MF_00755">
    <property type="entry name" value="RNase_P_2"/>
    <property type="match status" value="1"/>
</dbReference>
<dbReference type="InterPro" id="IPR002759">
    <property type="entry name" value="Pop5/Rpp14/Rnp2-like"/>
</dbReference>
<dbReference type="InterPro" id="IPR038085">
    <property type="entry name" value="Rnp2-like_sf"/>
</dbReference>
<dbReference type="InterPro" id="IPR016434">
    <property type="entry name" value="Rnp2_archaea"/>
</dbReference>
<dbReference type="PANTHER" id="PTHR15441">
    <property type="entry name" value="RIBONUCLEASE P PROTEIN SUBUNIT P14"/>
    <property type="match status" value="1"/>
</dbReference>
<dbReference type="PANTHER" id="PTHR15441:SF2">
    <property type="entry name" value="RIBONUCLEASE P_MRP PROTEIN SUBUNIT POP5"/>
    <property type="match status" value="1"/>
</dbReference>
<dbReference type="Pfam" id="PF01900">
    <property type="entry name" value="RNase_P_Rpp14"/>
    <property type="match status" value="1"/>
</dbReference>
<dbReference type="PIRSF" id="PIRSF004952">
    <property type="entry name" value="RNase_P_2"/>
    <property type="match status" value="1"/>
</dbReference>
<dbReference type="SUPFAM" id="SSF160350">
    <property type="entry name" value="Rnp2-like"/>
    <property type="match status" value="1"/>
</dbReference>
<accession>A5UJS3</accession>
<gene>
    <name evidence="1" type="primary">rnp2</name>
    <name type="ordered locus">Msm_0246</name>
</gene>
<organism>
    <name type="scientific">Methanobrevibacter smithii (strain ATCC 35061 / DSM 861 / OCM 144 / PS)</name>
    <dbReference type="NCBI Taxonomy" id="420247"/>
    <lineage>
        <taxon>Archaea</taxon>
        <taxon>Methanobacteriati</taxon>
        <taxon>Methanobacteriota</taxon>
        <taxon>Methanomada group</taxon>
        <taxon>Methanobacteria</taxon>
        <taxon>Methanobacteriales</taxon>
        <taxon>Methanobacteriaceae</taxon>
        <taxon>Methanobrevibacter</taxon>
    </lineage>
</organism>
<sequence length="120" mass="13991">MKLKVLPPTLRKNNRYLALDIKVKSVISKDDLVNIVWNGCIRFFGENGTGNFSLWVMKFYELEKTDEYNHYQAILRCQREYVDEVRASLALIYKHNRKDISVSTIGLSGTIKACQKFIEK</sequence>
<keyword id="KW-0963">Cytoplasm</keyword>
<keyword id="KW-0255">Endonuclease</keyword>
<keyword id="KW-0378">Hydrolase</keyword>
<keyword id="KW-0540">Nuclease</keyword>
<keyword id="KW-0819">tRNA processing</keyword>
<name>RNP2_METS3</name>
<protein>
    <recommendedName>
        <fullName evidence="1">Ribonuclease P protein component 2</fullName>
        <shortName evidence="1">RNase P component 2</shortName>
        <ecNumber evidence="1">3.1.26.5</ecNumber>
    </recommendedName>
    <alternativeName>
        <fullName evidence="1">Pop5</fullName>
    </alternativeName>
</protein>
<reference key="1">
    <citation type="journal article" date="2007" name="Proc. Natl. Acad. Sci. U.S.A.">
        <title>Genomic and metabolic adaptations of Methanobrevibacter smithii to the human gut.</title>
        <authorList>
            <person name="Samuel B.S."/>
            <person name="Hansen E.E."/>
            <person name="Manchester J.K."/>
            <person name="Coutinho P.M."/>
            <person name="Henrissat B."/>
            <person name="Fulton R."/>
            <person name="Latreille P."/>
            <person name="Kim K."/>
            <person name="Wilson R.K."/>
            <person name="Gordon J.I."/>
        </authorList>
    </citation>
    <scope>NUCLEOTIDE SEQUENCE [LARGE SCALE GENOMIC DNA]</scope>
    <source>
        <strain>ATCC 35061 / DSM 861 / OCM 144 / PS</strain>
    </source>
</reference>